<organism>
    <name type="scientific">Lysinibacillus sphaericus (strain C3-41)</name>
    <dbReference type="NCBI Taxonomy" id="444177"/>
    <lineage>
        <taxon>Bacteria</taxon>
        <taxon>Bacillati</taxon>
        <taxon>Bacillota</taxon>
        <taxon>Bacilli</taxon>
        <taxon>Bacillales</taxon>
        <taxon>Bacillaceae</taxon>
        <taxon>Lysinibacillus</taxon>
    </lineage>
</organism>
<sequence length="270" mass="30712">MKRLRVFVVSDSVGETGDQVAKAVISQFRPGLENTVIRRFPHIQSEELIRKIVFLAAQQQAFIVYTLVRQEMRKLLRDLCEQEKIHAVDIIGPALQSMATFMEENPLETPGIVHMLDDDYFKKIEAIEFAVKYDDGRDPRGLLQADIVLVGVSRTSKTPLSQYLAHKKYKVANVPLVPEVEPPEELLQLDPKKCFGLIISPEKLNSIRKERLMSLGLNDDAIYAQHNRILEEIQHFEKIVGKIGCRVIDVTNKAVEETANTIIEHILTCK</sequence>
<reference key="1">
    <citation type="journal article" date="2008" name="J. Bacteriol.">
        <title>Complete genome sequence of the mosquitocidal bacterium Bacillus sphaericus C3-41 and comparison with those of closely related Bacillus species.</title>
        <authorList>
            <person name="Hu X."/>
            <person name="Fan W."/>
            <person name="Han B."/>
            <person name="Liu H."/>
            <person name="Zheng D."/>
            <person name="Li Q."/>
            <person name="Dong W."/>
            <person name="Yan J."/>
            <person name="Gao M."/>
            <person name="Berry C."/>
            <person name="Yuan Z."/>
        </authorList>
    </citation>
    <scope>NUCLEOTIDE SEQUENCE [LARGE SCALE GENOMIC DNA]</scope>
    <source>
        <strain>C3-41</strain>
    </source>
</reference>
<dbReference type="EC" id="2.7.11.32" evidence="1"/>
<dbReference type="EC" id="2.7.4.27" evidence="1"/>
<dbReference type="EMBL" id="CP000817">
    <property type="protein sequence ID" value="ACA41188.1"/>
    <property type="molecule type" value="Genomic_DNA"/>
</dbReference>
<dbReference type="RefSeq" id="WP_008178459.1">
    <property type="nucleotide sequence ID" value="NC_010382.1"/>
</dbReference>
<dbReference type="SMR" id="B1HTI4"/>
<dbReference type="EnsemblBacteria" id="ACA41188">
    <property type="protein sequence ID" value="ACA41188"/>
    <property type="gene ID" value="Bsph_3704"/>
</dbReference>
<dbReference type="KEGG" id="lsp:Bsph_3704"/>
<dbReference type="HOGENOM" id="CLU_046206_2_1_9"/>
<dbReference type="Proteomes" id="UP000002164">
    <property type="component" value="Chromosome"/>
</dbReference>
<dbReference type="GO" id="GO:0043531">
    <property type="term" value="F:ADP binding"/>
    <property type="evidence" value="ECO:0007669"/>
    <property type="project" value="UniProtKB-UniRule"/>
</dbReference>
<dbReference type="GO" id="GO:0005524">
    <property type="term" value="F:ATP binding"/>
    <property type="evidence" value="ECO:0007669"/>
    <property type="project" value="InterPro"/>
</dbReference>
<dbReference type="GO" id="GO:0016776">
    <property type="term" value="F:phosphotransferase activity, phosphate group as acceptor"/>
    <property type="evidence" value="ECO:0007669"/>
    <property type="project" value="UniProtKB-UniRule"/>
</dbReference>
<dbReference type="GO" id="GO:0004674">
    <property type="term" value="F:protein serine/threonine kinase activity"/>
    <property type="evidence" value="ECO:0007669"/>
    <property type="project" value="UniProtKB-UniRule"/>
</dbReference>
<dbReference type="HAMAP" id="MF_00921">
    <property type="entry name" value="PDRP"/>
    <property type="match status" value="1"/>
</dbReference>
<dbReference type="InterPro" id="IPR005177">
    <property type="entry name" value="Kinase-pyrophosphorylase"/>
</dbReference>
<dbReference type="InterPro" id="IPR026565">
    <property type="entry name" value="PPDK_reg"/>
</dbReference>
<dbReference type="NCBIfam" id="NF003742">
    <property type="entry name" value="PRK05339.1"/>
    <property type="match status" value="1"/>
</dbReference>
<dbReference type="PANTHER" id="PTHR31756">
    <property type="entry name" value="PYRUVATE, PHOSPHATE DIKINASE REGULATORY PROTEIN 1, CHLOROPLASTIC"/>
    <property type="match status" value="1"/>
</dbReference>
<dbReference type="PANTHER" id="PTHR31756:SF3">
    <property type="entry name" value="PYRUVATE, PHOSPHATE DIKINASE REGULATORY PROTEIN 1, CHLOROPLASTIC"/>
    <property type="match status" value="1"/>
</dbReference>
<dbReference type="Pfam" id="PF03618">
    <property type="entry name" value="Kinase-PPPase"/>
    <property type="match status" value="1"/>
</dbReference>
<keyword id="KW-0418">Kinase</keyword>
<keyword id="KW-0547">Nucleotide-binding</keyword>
<keyword id="KW-0723">Serine/threonine-protein kinase</keyword>
<keyword id="KW-0808">Transferase</keyword>
<feature type="chain" id="PRO_1000136481" description="Putative pyruvate, phosphate dikinase regulatory protein">
    <location>
        <begin position="1"/>
        <end position="270"/>
    </location>
</feature>
<feature type="binding site" evidence="1">
    <location>
        <begin position="151"/>
        <end position="158"/>
    </location>
    <ligand>
        <name>ADP</name>
        <dbReference type="ChEBI" id="CHEBI:456216"/>
    </ligand>
</feature>
<comment type="function">
    <text evidence="1">Bifunctional serine/threonine kinase and phosphorylase involved in the regulation of the pyruvate, phosphate dikinase (PPDK) by catalyzing its phosphorylation/dephosphorylation.</text>
</comment>
<comment type="catalytic activity">
    <reaction evidence="1">
        <text>N(tele)-phospho-L-histidyl/L-threonyl-[pyruvate, phosphate dikinase] + ADP = N(tele)-phospho-L-histidyl/O-phospho-L-threonyl-[pyruvate, phosphate dikinase] + AMP + H(+)</text>
        <dbReference type="Rhea" id="RHEA:43692"/>
        <dbReference type="Rhea" id="RHEA-COMP:10650"/>
        <dbReference type="Rhea" id="RHEA-COMP:10651"/>
        <dbReference type="ChEBI" id="CHEBI:15378"/>
        <dbReference type="ChEBI" id="CHEBI:30013"/>
        <dbReference type="ChEBI" id="CHEBI:61977"/>
        <dbReference type="ChEBI" id="CHEBI:83586"/>
        <dbReference type="ChEBI" id="CHEBI:456215"/>
        <dbReference type="ChEBI" id="CHEBI:456216"/>
        <dbReference type="EC" id="2.7.11.32"/>
    </reaction>
</comment>
<comment type="catalytic activity">
    <reaction evidence="1">
        <text>N(tele)-phospho-L-histidyl/O-phospho-L-threonyl-[pyruvate, phosphate dikinase] + phosphate + H(+) = N(tele)-phospho-L-histidyl/L-threonyl-[pyruvate, phosphate dikinase] + diphosphate</text>
        <dbReference type="Rhea" id="RHEA:43696"/>
        <dbReference type="Rhea" id="RHEA-COMP:10650"/>
        <dbReference type="Rhea" id="RHEA-COMP:10651"/>
        <dbReference type="ChEBI" id="CHEBI:15378"/>
        <dbReference type="ChEBI" id="CHEBI:30013"/>
        <dbReference type="ChEBI" id="CHEBI:33019"/>
        <dbReference type="ChEBI" id="CHEBI:43474"/>
        <dbReference type="ChEBI" id="CHEBI:61977"/>
        <dbReference type="ChEBI" id="CHEBI:83586"/>
        <dbReference type="EC" id="2.7.4.27"/>
    </reaction>
</comment>
<comment type="similarity">
    <text evidence="1">Belongs to the pyruvate, phosphate/water dikinase regulatory protein family. PDRP subfamily.</text>
</comment>
<evidence type="ECO:0000255" key="1">
    <source>
        <dbReference type="HAMAP-Rule" id="MF_00921"/>
    </source>
</evidence>
<name>PDRP_LYSSC</name>
<gene>
    <name type="ordered locus">Bsph_3704</name>
</gene>
<proteinExistence type="inferred from homology"/>
<protein>
    <recommendedName>
        <fullName evidence="1">Putative pyruvate, phosphate dikinase regulatory protein</fullName>
        <shortName evidence="1">PPDK regulatory protein</shortName>
        <ecNumber evidence="1">2.7.11.32</ecNumber>
        <ecNumber evidence="1">2.7.4.27</ecNumber>
    </recommendedName>
</protein>
<accession>B1HTI4</accession>